<dbReference type="EC" id="1.1.1.1"/>
<dbReference type="EMBL" id="U95268">
    <property type="protein sequence ID" value="AAD00794.1"/>
    <property type="molecule type" value="Genomic_DNA"/>
</dbReference>
<dbReference type="EMBL" id="U95269">
    <property type="protein sequence ID" value="AAD00795.1"/>
    <property type="molecule type" value="Genomic_DNA"/>
</dbReference>
<dbReference type="EMBL" id="AF264074">
    <property type="protein sequence ID" value="AAF72716.1"/>
    <property type="molecule type" value="Genomic_DNA"/>
</dbReference>
<dbReference type="SMR" id="Q9NG42"/>
<dbReference type="GO" id="GO:0005737">
    <property type="term" value="C:cytoplasm"/>
    <property type="evidence" value="ECO:0007669"/>
    <property type="project" value="TreeGrafter"/>
</dbReference>
<dbReference type="GO" id="GO:0004022">
    <property type="term" value="F:alcohol dehydrogenase (NAD+) activity"/>
    <property type="evidence" value="ECO:0000250"/>
    <property type="project" value="UniProtKB"/>
</dbReference>
<dbReference type="GO" id="GO:0046164">
    <property type="term" value="P:alcohol catabolic process"/>
    <property type="evidence" value="ECO:0000250"/>
    <property type="project" value="UniProtKB"/>
</dbReference>
<dbReference type="CDD" id="cd05323">
    <property type="entry name" value="ADH_SDR_c_like"/>
    <property type="match status" value="1"/>
</dbReference>
<dbReference type="FunFam" id="3.40.50.720:FF:000302">
    <property type="entry name" value="Alcohol dehydrogenase"/>
    <property type="match status" value="1"/>
</dbReference>
<dbReference type="Gene3D" id="3.40.50.720">
    <property type="entry name" value="NAD(P)-binding Rossmann-like Domain"/>
    <property type="match status" value="1"/>
</dbReference>
<dbReference type="InterPro" id="IPR002425">
    <property type="entry name" value="ADH_Drosophila-type"/>
</dbReference>
<dbReference type="InterPro" id="IPR036291">
    <property type="entry name" value="NAD(P)-bd_dom_sf"/>
</dbReference>
<dbReference type="InterPro" id="IPR020904">
    <property type="entry name" value="Sc_DH/Rdtase_CS"/>
</dbReference>
<dbReference type="InterPro" id="IPR002347">
    <property type="entry name" value="SDR_fam"/>
</dbReference>
<dbReference type="PANTHER" id="PTHR44229">
    <property type="entry name" value="15-HYDROXYPROSTAGLANDIN DEHYDROGENASE [NAD(+)]"/>
    <property type="match status" value="1"/>
</dbReference>
<dbReference type="PANTHER" id="PTHR44229:SF8">
    <property type="entry name" value="ALCOHOL DEHYDROGENASE-RELATED"/>
    <property type="match status" value="1"/>
</dbReference>
<dbReference type="Pfam" id="PF00106">
    <property type="entry name" value="adh_short"/>
    <property type="match status" value="1"/>
</dbReference>
<dbReference type="PRINTS" id="PR01168">
    <property type="entry name" value="ALCDHDRGNASE"/>
</dbReference>
<dbReference type="PRINTS" id="PR01167">
    <property type="entry name" value="INSADHFAMILY"/>
</dbReference>
<dbReference type="PRINTS" id="PR00080">
    <property type="entry name" value="SDRFAMILY"/>
</dbReference>
<dbReference type="SUPFAM" id="SSF51735">
    <property type="entry name" value="NAD(P)-binding Rossmann-fold domains"/>
    <property type="match status" value="1"/>
</dbReference>
<dbReference type="PROSITE" id="PS00061">
    <property type="entry name" value="ADH_SHORT"/>
    <property type="match status" value="1"/>
</dbReference>
<sequence>MALTNKNIIFVAGLGGIGLDTSRELVKRDLKNLVILDRIDNPAAIAELKAINPKVTVTFYPYDVTTPLTETTKLLKTIFAQLKTVDVLINGAGILDDHQIERTIAVNFTGLVNTTTAILDFWDKRKGGPGGVICNIGSVTGFNAIYQVPVYSASKAAVVSFTQSIAKLANVTGVTAFTVNPGITKTTLVHKFNSWLDVETRVAEKLLEHPTQTTLACAQNFVKAIELNKNGAIWKLDLGTLEPIEWTKHWDSGI</sequence>
<protein>
    <recommendedName>
        <fullName>Alcohol dehydrogenase</fullName>
        <ecNumber>1.1.1.1</ecNumber>
    </recommendedName>
</protein>
<gene>
    <name type="primary">Adh</name>
</gene>
<keyword id="KW-0520">NAD</keyword>
<keyword id="KW-0560">Oxidoreductase</keyword>
<evidence type="ECO:0000250" key="1"/>
<evidence type="ECO:0000250" key="2">
    <source>
        <dbReference type="UniProtKB" id="Q05114"/>
    </source>
</evidence>
<evidence type="ECO:0000255" key="3">
    <source>
        <dbReference type="PROSITE-ProRule" id="PRU10001"/>
    </source>
</evidence>
<evidence type="ECO:0000255" key="4">
    <source>
        <dbReference type="RuleBase" id="RU000363"/>
    </source>
</evidence>
<evidence type="ECO:0000305" key="5"/>
<evidence type="ECO:0000312" key="6">
    <source>
        <dbReference type="EMBL" id="AAD00794.1"/>
    </source>
</evidence>
<evidence type="ECO:0000312" key="7">
    <source>
        <dbReference type="EMBL" id="AAD00795.1"/>
    </source>
</evidence>
<proteinExistence type="inferred from homology"/>
<accession>Q9NG42</accession>
<reference evidence="6" key="1">
    <citation type="journal article" date="1998" name="Evolution">
        <title>A molecular phylogeny of the Drosophila willistoni group: conflicts between species concepts?</title>
        <authorList>
            <person name="Gleason J.M."/>
            <person name="Griffith E.C."/>
            <person name="Powell J.R."/>
        </authorList>
        <dbReference type="AGRICOLA" id="IND21806050"/>
    </citation>
    <scope>NUCLEOTIDE SEQUENCE [GENOMIC DNA]</scope>
    <source>
        <strain evidence="6">0741.0</strain>
        <strain evidence="7">Puerto Rico</strain>
    </source>
</reference>
<reference evidence="5" key="2">
    <citation type="thesis" date="2000" institute="University of Arizona / Tucson" country="United States">
        <title>Phylogenetic relationships of flies in family Drosophilidae inferred by combined analysis of morphological and molecular characters.</title>
        <authorList>
            <person name="O'Grady P.M."/>
        </authorList>
    </citation>
    <scope>NUCLEOTIDE SEQUENCE [GENOMIC DNA] OF 32-166</scope>
</reference>
<feature type="chain" id="PRO_0000054459" description="Alcohol dehydrogenase">
    <location>
        <begin position="1"/>
        <end position="254"/>
    </location>
</feature>
<feature type="active site" description="Proton acceptor" evidence="3">
    <location>
        <position position="151"/>
    </location>
</feature>
<feature type="binding site" evidence="2">
    <location>
        <begin position="9"/>
        <end position="32"/>
    </location>
    <ligand>
        <name>NAD(+)</name>
        <dbReference type="ChEBI" id="CHEBI:57540"/>
    </ligand>
</feature>
<feature type="binding site" evidence="1">
    <location>
        <position position="138"/>
    </location>
    <ligand>
        <name>substrate</name>
    </ligand>
</feature>
<feature type="sequence conflict" description="In Ref. 2; AAF72716." evidence="5" ref="2">
    <original>A</original>
    <variation>R</variation>
    <location>
        <position position="157"/>
    </location>
</feature>
<name>ADH_DROEQ</name>
<organism evidence="6">
    <name type="scientific">Drosophila equinoxialis</name>
    <name type="common">Fruit fly</name>
    <dbReference type="NCBI Taxonomy" id="46790"/>
    <lineage>
        <taxon>Eukaryota</taxon>
        <taxon>Metazoa</taxon>
        <taxon>Ecdysozoa</taxon>
        <taxon>Arthropoda</taxon>
        <taxon>Hexapoda</taxon>
        <taxon>Insecta</taxon>
        <taxon>Pterygota</taxon>
        <taxon>Neoptera</taxon>
        <taxon>Endopterygota</taxon>
        <taxon>Diptera</taxon>
        <taxon>Brachycera</taxon>
        <taxon>Muscomorpha</taxon>
        <taxon>Ephydroidea</taxon>
        <taxon>Drosophilidae</taxon>
        <taxon>Drosophila</taxon>
        <taxon>Sophophora</taxon>
    </lineage>
</organism>
<comment type="catalytic activity">
    <reaction evidence="3 5">
        <text>a primary alcohol + NAD(+) = an aldehyde + NADH + H(+)</text>
        <dbReference type="Rhea" id="RHEA:10736"/>
        <dbReference type="ChEBI" id="CHEBI:15378"/>
        <dbReference type="ChEBI" id="CHEBI:15734"/>
        <dbReference type="ChEBI" id="CHEBI:17478"/>
        <dbReference type="ChEBI" id="CHEBI:57540"/>
        <dbReference type="ChEBI" id="CHEBI:57945"/>
        <dbReference type="EC" id="1.1.1.1"/>
    </reaction>
</comment>
<comment type="catalytic activity">
    <reaction evidence="3 5">
        <text>a secondary alcohol + NAD(+) = a ketone + NADH + H(+)</text>
        <dbReference type="Rhea" id="RHEA:10740"/>
        <dbReference type="ChEBI" id="CHEBI:15378"/>
        <dbReference type="ChEBI" id="CHEBI:17087"/>
        <dbReference type="ChEBI" id="CHEBI:35681"/>
        <dbReference type="ChEBI" id="CHEBI:57540"/>
        <dbReference type="ChEBI" id="CHEBI:57945"/>
        <dbReference type="EC" id="1.1.1.1"/>
    </reaction>
</comment>
<comment type="subunit">
    <text evidence="5">Homodimer.</text>
</comment>
<comment type="similarity">
    <text evidence="4 5">Belongs to the short-chain dehydrogenases/reductases (SDR) family.</text>
</comment>